<accession>Q55EY8</accession>
<organism>
    <name type="scientific">Dictyostelium discoideum</name>
    <name type="common">Social amoeba</name>
    <dbReference type="NCBI Taxonomy" id="44689"/>
    <lineage>
        <taxon>Eukaryota</taxon>
        <taxon>Amoebozoa</taxon>
        <taxon>Evosea</taxon>
        <taxon>Eumycetozoa</taxon>
        <taxon>Dictyostelia</taxon>
        <taxon>Dictyosteliales</taxon>
        <taxon>Dictyosteliaceae</taxon>
        <taxon>Dictyostelium</taxon>
    </lineage>
</organism>
<sequence>MTSRYAKRLQKELLDLKTNPPPCISITEGDNLDKWVIAVDGTEGSIYQGEHFKLQFKFSSGYPLDSPEVIFIGTPPIHPHIYSNGHICLSILYDNWSPALTVSSVCLSILSMLSGCTEKIRPTDDSKYVSRVLNKSPKEVRWMFHDDTV</sequence>
<evidence type="ECO:0000250" key="1">
    <source>
        <dbReference type="UniProtKB" id="Q96B02"/>
    </source>
</evidence>
<evidence type="ECO:0000255" key="2">
    <source>
        <dbReference type="PROSITE-ProRule" id="PRU00388"/>
    </source>
</evidence>
<feature type="chain" id="PRO_0000327426" description="Probable ubiquitin-conjugating enzyme E2 W">
    <location>
        <begin position="1"/>
        <end position="149"/>
    </location>
</feature>
<feature type="domain" description="UBC core" evidence="2">
    <location>
        <begin position="4"/>
        <end position="149"/>
    </location>
</feature>
<feature type="active site" description="Glycyl thioester intermediate" evidence="2">
    <location>
        <position position="88"/>
    </location>
</feature>
<gene>
    <name type="primary">ube2w</name>
    <name type="ORF">DDB_G0268938</name>
</gene>
<reference key="1">
    <citation type="journal article" date="2005" name="Nature">
        <title>The genome of the social amoeba Dictyostelium discoideum.</title>
        <authorList>
            <person name="Eichinger L."/>
            <person name="Pachebat J.A."/>
            <person name="Gloeckner G."/>
            <person name="Rajandream M.A."/>
            <person name="Sucgang R."/>
            <person name="Berriman M."/>
            <person name="Song J."/>
            <person name="Olsen R."/>
            <person name="Szafranski K."/>
            <person name="Xu Q."/>
            <person name="Tunggal B."/>
            <person name="Kummerfeld S."/>
            <person name="Madera M."/>
            <person name="Konfortov B.A."/>
            <person name="Rivero F."/>
            <person name="Bankier A.T."/>
            <person name="Lehmann R."/>
            <person name="Hamlin N."/>
            <person name="Davies R."/>
            <person name="Gaudet P."/>
            <person name="Fey P."/>
            <person name="Pilcher K."/>
            <person name="Chen G."/>
            <person name="Saunders D."/>
            <person name="Sodergren E.J."/>
            <person name="Davis P."/>
            <person name="Kerhornou A."/>
            <person name="Nie X."/>
            <person name="Hall N."/>
            <person name="Anjard C."/>
            <person name="Hemphill L."/>
            <person name="Bason N."/>
            <person name="Farbrother P."/>
            <person name="Desany B."/>
            <person name="Just E."/>
            <person name="Morio T."/>
            <person name="Rost R."/>
            <person name="Churcher C.M."/>
            <person name="Cooper J."/>
            <person name="Haydock S."/>
            <person name="van Driessche N."/>
            <person name="Cronin A."/>
            <person name="Goodhead I."/>
            <person name="Muzny D.M."/>
            <person name="Mourier T."/>
            <person name="Pain A."/>
            <person name="Lu M."/>
            <person name="Harper D."/>
            <person name="Lindsay R."/>
            <person name="Hauser H."/>
            <person name="James K.D."/>
            <person name="Quiles M."/>
            <person name="Madan Babu M."/>
            <person name="Saito T."/>
            <person name="Buchrieser C."/>
            <person name="Wardroper A."/>
            <person name="Felder M."/>
            <person name="Thangavelu M."/>
            <person name="Johnson D."/>
            <person name="Knights A."/>
            <person name="Loulseged H."/>
            <person name="Mungall K.L."/>
            <person name="Oliver K."/>
            <person name="Price C."/>
            <person name="Quail M.A."/>
            <person name="Urushihara H."/>
            <person name="Hernandez J."/>
            <person name="Rabbinowitsch E."/>
            <person name="Steffen D."/>
            <person name="Sanders M."/>
            <person name="Ma J."/>
            <person name="Kohara Y."/>
            <person name="Sharp S."/>
            <person name="Simmonds M.N."/>
            <person name="Spiegler S."/>
            <person name="Tivey A."/>
            <person name="Sugano S."/>
            <person name="White B."/>
            <person name="Walker D."/>
            <person name="Woodward J.R."/>
            <person name="Winckler T."/>
            <person name="Tanaka Y."/>
            <person name="Shaulsky G."/>
            <person name="Schleicher M."/>
            <person name="Weinstock G.M."/>
            <person name="Rosenthal A."/>
            <person name="Cox E.C."/>
            <person name="Chisholm R.L."/>
            <person name="Gibbs R.A."/>
            <person name="Loomis W.F."/>
            <person name="Platzer M."/>
            <person name="Kay R.R."/>
            <person name="Williams J.G."/>
            <person name="Dear P.H."/>
            <person name="Noegel A.A."/>
            <person name="Barrell B.G."/>
            <person name="Kuspa A."/>
        </authorList>
    </citation>
    <scope>NUCLEOTIDE SEQUENCE [LARGE SCALE GENOMIC DNA]</scope>
    <source>
        <strain>AX4</strain>
    </source>
</reference>
<dbReference type="EC" id="2.3.2.23"/>
<dbReference type="EC" id="2.3.2.25"/>
<dbReference type="EMBL" id="AAFI02000004">
    <property type="protein sequence ID" value="EAL73058.1"/>
    <property type="molecule type" value="Genomic_DNA"/>
</dbReference>
<dbReference type="RefSeq" id="XP_646882.1">
    <property type="nucleotide sequence ID" value="XM_641790.1"/>
</dbReference>
<dbReference type="SMR" id="Q55EY8"/>
<dbReference type="FunCoup" id="Q55EY8">
    <property type="interactions" value="289"/>
</dbReference>
<dbReference type="STRING" id="44689.Q55EY8"/>
<dbReference type="PaxDb" id="44689-DDB0238664"/>
<dbReference type="EnsemblProtists" id="EAL73058">
    <property type="protein sequence ID" value="EAL73058"/>
    <property type="gene ID" value="DDB_G0268938"/>
</dbReference>
<dbReference type="GeneID" id="8616566"/>
<dbReference type="KEGG" id="ddi:DDB_G0268938"/>
<dbReference type="dictyBase" id="DDB_G0268938">
    <property type="gene designation" value="ube2w"/>
</dbReference>
<dbReference type="VEuPathDB" id="AmoebaDB:DDB_G0268938"/>
<dbReference type="eggNOG" id="KOG0427">
    <property type="taxonomic scope" value="Eukaryota"/>
</dbReference>
<dbReference type="HOGENOM" id="CLU_030988_15_1_1"/>
<dbReference type="InParanoid" id="Q55EY8"/>
<dbReference type="OMA" id="WQMDIKV"/>
<dbReference type="PhylomeDB" id="Q55EY8"/>
<dbReference type="Reactome" id="R-DDI-8866652">
    <property type="pathway name" value="Synthesis of active ubiquitin: roles of E1 and E2 enzymes"/>
</dbReference>
<dbReference type="Reactome" id="R-DDI-983168">
    <property type="pathway name" value="Antigen processing: Ubiquitination &amp; Proteasome degradation"/>
</dbReference>
<dbReference type="UniPathway" id="UPA00143"/>
<dbReference type="PRO" id="PR:Q55EY8"/>
<dbReference type="Proteomes" id="UP000002195">
    <property type="component" value="Chromosome 1"/>
</dbReference>
<dbReference type="GO" id="GO:0005634">
    <property type="term" value="C:nucleus"/>
    <property type="evidence" value="ECO:0000318"/>
    <property type="project" value="GO_Central"/>
</dbReference>
<dbReference type="GO" id="GO:0005524">
    <property type="term" value="F:ATP binding"/>
    <property type="evidence" value="ECO:0007669"/>
    <property type="project" value="UniProtKB-KW"/>
</dbReference>
<dbReference type="GO" id="GO:0061631">
    <property type="term" value="F:ubiquitin conjugating enzyme activity"/>
    <property type="evidence" value="ECO:0000318"/>
    <property type="project" value="GO_Central"/>
</dbReference>
<dbReference type="GO" id="GO:0043161">
    <property type="term" value="P:proteasome-mediated ubiquitin-dependent protein catabolic process"/>
    <property type="evidence" value="ECO:0000318"/>
    <property type="project" value="GO_Central"/>
</dbReference>
<dbReference type="GO" id="GO:0000209">
    <property type="term" value="P:protein polyubiquitination"/>
    <property type="evidence" value="ECO:0000318"/>
    <property type="project" value="GO_Central"/>
</dbReference>
<dbReference type="CDD" id="cd23808">
    <property type="entry name" value="UBCc_UBE2W"/>
    <property type="match status" value="1"/>
</dbReference>
<dbReference type="FunFam" id="3.10.110.10:FF:000022">
    <property type="entry name" value="Ubiquitin-conjugating enzyme E2 W"/>
    <property type="match status" value="1"/>
</dbReference>
<dbReference type="Gene3D" id="3.10.110.10">
    <property type="entry name" value="Ubiquitin Conjugating Enzyme"/>
    <property type="match status" value="1"/>
</dbReference>
<dbReference type="InterPro" id="IPR050113">
    <property type="entry name" value="Ub_conjugating_enzyme"/>
</dbReference>
<dbReference type="InterPro" id="IPR000608">
    <property type="entry name" value="UBQ-conjugat_E2_core"/>
</dbReference>
<dbReference type="InterPro" id="IPR016135">
    <property type="entry name" value="UBQ-conjugating_enzyme/RWD"/>
</dbReference>
<dbReference type="PANTHER" id="PTHR24067">
    <property type="entry name" value="UBIQUITIN-CONJUGATING ENZYME E2"/>
    <property type="match status" value="1"/>
</dbReference>
<dbReference type="Pfam" id="PF00179">
    <property type="entry name" value="UQ_con"/>
    <property type="match status" value="1"/>
</dbReference>
<dbReference type="SMART" id="SM00212">
    <property type="entry name" value="UBCc"/>
    <property type="match status" value="1"/>
</dbReference>
<dbReference type="SUPFAM" id="SSF54495">
    <property type="entry name" value="UBC-like"/>
    <property type="match status" value="1"/>
</dbReference>
<dbReference type="PROSITE" id="PS50127">
    <property type="entry name" value="UBC_2"/>
    <property type="match status" value="1"/>
</dbReference>
<protein>
    <recommendedName>
        <fullName>Probable ubiquitin-conjugating enzyme E2 W</fullName>
        <ecNumber>2.3.2.23</ecNumber>
    </recommendedName>
    <alternativeName>
        <fullName>E2 ubiquitin-conjugating enzyme W</fullName>
    </alternativeName>
    <alternativeName>
        <fullName>N-terminal E2 ubiquitin-conjugating enzyme</fullName>
        <ecNumber>2.3.2.25</ecNumber>
    </alternativeName>
    <alternativeName>
        <fullName>Ubiquitin carrier protein W</fullName>
    </alternativeName>
    <alternativeName>
        <fullName>Ubiquitin-protein ligase W</fullName>
    </alternativeName>
</protein>
<keyword id="KW-0067">ATP-binding</keyword>
<keyword id="KW-0547">Nucleotide-binding</keyword>
<keyword id="KW-1185">Reference proteome</keyword>
<keyword id="KW-0808">Transferase</keyword>
<keyword id="KW-0833">Ubl conjugation pathway</keyword>
<comment type="function">
    <text evidence="2">Catalyzes the covalent attachment of ubiquitin to other proteins.</text>
</comment>
<comment type="catalytic activity">
    <reaction evidence="1 2">
        <text>S-ubiquitinyl-[E1 ubiquitin-activating enzyme]-L-cysteine + [E2 ubiquitin-conjugating enzyme]-L-cysteine = [E1 ubiquitin-activating enzyme]-L-cysteine + S-ubiquitinyl-[E2 ubiquitin-conjugating enzyme]-L-cysteine.</text>
        <dbReference type="EC" id="2.3.2.23"/>
    </reaction>
</comment>
<comment type="catalytic activity">
    <reaction evidence="1">
        <text>S-ubiquitinyl-[E1 ubiquitin-activating enzyme]-L-cysteine + [acceptor protein]-N-terminal-amino acid = [E1 ubiquitin-activating enzyme]-L-cysteine + N-terminal-ubiquitinyl-[acceptor protein].</text>
        <dbReference type="EC" id="2.3.2.25"/>
    </reaction>
</comment>
<comment type="pathway">
    <text evidence="2">Protein modification; protein ubiquitination.</text>
</comment>
<comment type="similarity">
    <text evidence="2">Belongs to the ubiquitin-conjugating enzyme family.</text>
</comment>
<name>UBE2W_DICDI</name>
<proteinExistence type="inferred from homology"/>